<proteinExistence type="evidence at protein level"/>
<gene>
    <name evidence="6" type="primary">RSR1</name>
    <name type="synonym">BUD1</name>
    <name evidence="8" type="ordered locus">YGR152C</name>
    <name type="ORF">G6658</name>
</gene>
<feature type="chain" id="PRO_0000082691" description="Ras-related protein RSR1">
    <location>
        <begin position="1"/>
        <end position="269"/>
    </location>
</feature>
<feature type="propeptide" id="PRO_0000281342" description="Removed in mature form" evidence="1">
    <location>
        <begin position="270"/>
        <end position="272"/>
    </location>
</feature>
<feature type="region of interest" description="Disordered" evidence="3">
    <location>
        <begin position="177"/>
        <end position="272"/>
    </location>
</feature>
<feature type="short sequence motif" description="Effector region" evidence="2">
    <location>
        <begin position="32"/>
        <end position="40"/>
    </location>
</feature>
<feature type="compositionally biased region" description="Polar residues" evidence="3">
    <location>
        <begin position="180"/>
        <end position="232"/>
    </location>
</feature>
<feature type="compositionally biased region" description="Polar residues" evidence="3">
    <location>
        <begin position="245"/>
        <end position="258"/>
    </location>
</feature>
<feature type="binding site" evidence="1">
    <location>
        <begin position="10"/>
        <end position="17"/>
    </location>
    <ligand>
        <name>GTP</name>
        <dbReference type="ChEBI" id="CHEBI:37565"/>
    </ligand>
</feature>
<feature type="binding site" evidence="1">
    <location>
        <begin position="57"/>
        <end position="61"/>
    </location>
    <ligand>
        <name>GTP</name>
        <dbReference type="ChEBI" id="CHEBI:37565"/>
    </ligand>
</feature>
<feature type="binding site" evidence="1">
    <location>
        <begin position="116"/>
        <end position="119"/>
    </location>
    <ligand>
        <name>GTP</name>
        <dbReference type="ChEBI" id="CHEBI:37565"/>
    </ligand>
</feature>
<feature type="modified residue" description="Cysteine methyl ester" evidence="1">
    <location>
        <position position="269"/>
    </location>
</feature>
<feature type="lipid moiety-binding region" description="S-geranylgeranyl cysteine" evidence="1">
    <location>
        <position position="269"/>
    </location>
</feature>
<feature type="mutagenesis site" description="Loss of GAP-induced GTPase activity." evidence="4">
    <original>G</original>
    <variation>V</variation>
    <location>
        <position position="12"/>
    </location>
</feature>
<reference key="1">
    <citation type="journal article" date="1989" name="Proc. Natl. Acad. Sci. U.S.A.">
        <title>Multicopy suppression of the cdc24 budding defect in yeast by CDC42 and three newly identified genes including the ras-related gene RSR1.</title>
        <authorList>
            <person name="Bender A."/>
            <person name="Pringle J.R."/>
        </authorList>
    </citation>
    <scope>NUCLEOTIDE SEQUENCE [GENOMIC DNA]</scope>
    <scope>FUNCTION</scope>
</reference>
<reference key="2">
    <citation type="journal article" date="1995" name="Yeast">
        <title>The sequence of a 27 kb segment on the right arm of chromosome VII from Saccharomyces cerevisiae reveals MOL1, NAT2, RPL30B, RSR1, CYS4, PEM1/CHO2, NSR1 genes and ten new open reading frames.</title>
        <authorList>
            <person name="Skala J."/>
            <person name="Nawrocki A."/>
            <person name="Goffeau A."/>
        </authorList>
    </citation>
    <scope>NUCLEOTIDE SEQUENCE [GENOMIC DNA]</scope>
    <source>
        <strain>ATCC 204508 / S288c</strain>
    </source>
</reference>
<reference key="3">
    <citation type="journal article" date="1997" name="Nature">
        <title>The nucleotide sequence of Saccharomyces cerevisiae chromosome VII.</title>
        <authorList>
            <person name="Tettelin H."/>
            <person name="Agostoni-Carbone M.L."/>
            <person name="Albermann K."/>
            <person name="Albers M."/>
            <person name="Arroyo J."/>
            <person name="Backes U."/>
            <person name="Barreiros T."/>
            <person name="Bertani I."/>
            <person name="Bjourson A.J."/>
            <person name="Brueckner M."/>
            <person name="Bruschi C.V."/>
            <person name="Carignani G."/>
            <person name="Castagnoli L."/>
            <person name="Cerdan E."/>
            <person name="Clemente M.L."/>
            <person name="Coblenz A."/>
            <person name="Coglievina M."/>
            <person name="Coissac E."/>
            <person name="Defoor E."/>
            <person name="Del Bino S."/>
            <person name="Delius H."/>
            <person name="Delneri D."/>
            <person name="de Wergifosse P."/>
            <person name="Dujon B."/>
            <person name="Durand P."/>
            <person name="Entian K.-D."/>
            <person name="Eraso P."/>
            <person name="Escribano V."/>
            <person name="Fabiani L."/>
            <person name="Fartmann B."/>
            <person name="Feroli F."/>
            <person name="Feuermann M."/>
            <person name="Frontali L."/>
            <person name="Garcia-Gonzalez M."/>
            <person name="Garcia-Saez M.I."/>
            <person name="Goffeau A."/>
            <person name="Guerreiro P."/>
            <person name="Hani J."/>
            <person name="Hansen M."/>
            <person name="Hebling U."/>
            <person name="Hernandez K."/>
            <person name="Heumann K."/>
            <person name="Hilger F."/>
            <person name="Hofmann B."/>
            <person name="Indge K.J."/>
            <person name="James C.M."/>
            <person name="Klima R."/>
            <person name="Koetter P."/>
            <person name="Kramer B."/>
            <person name="Kramer W."/>
            <person name="Lauquin G."/>
            <person name="Leuther H."/>
            <person name="Louis E.J."/>
            <person name="Maillier E."/>
            <person name="Marconi A."/>
            <person name="Martegani E."/>
            <person name="Mazon M.J."/>
            <person name="Mazzoni C."/>
            <person name="McReynolds A.D.K."/>
            <person name="Melchioretto P."/>
            <person name="Mewes H.-W."/>
            <person name="Minenkova O."/>
            <person name="Mueller-Auer S."/>
            <person name="Nawrocki A."/>
            <person name="Netter P."/>
            <person name="Neu R."/>
            <person name="Nombela C."/>
            <person name="Oliver S.G."/>
            <person name="Panzeri L."/>
            <person name="Paoluzi S."/>
            <person name="Plevani P."/>
            <person name="Portetelle D."/>
            <person name="Portillo F."/>
            <person name="Potier S."/>
            <person name="Purnelle B."/>
            <person name="Rieger M."/>
            <person name="Riles L."/>
            <person name="Rinaldi T."/>
            <person name="Robben J."/>
            <person name="Rodrigues-Pousada C."/>
            <person name="Rodriguez-Belmonte E."/>
            <person name="Rodriguez-Torres A.M."/>
            <person name="Rose M."/>
            <person name="Ruzzi M."/>
            <person name="Saliola M."/>
            <person name="Sanchez-Perez M."/>
            <person name="Schaefer B."/>
            <person name="Schaefer M."/>
            <person name="Scharfe M."/>
            <person name="Schmidheini T."/>
            <person name="Schreer A."/>
            <person name="Skala J."/>
            <person name="Souciet J.-L."/>
            <person name="Steensma H.Y."/>
            <person name="Talla E."/>
            <person name="Thierry A."/>
            <person name="Vandenbol M."/>
            <person name="van der Aart Q.J.M."/>
            <person name="Van Dyck L."/>
            <person name="Vanoni M."/>
            <person name="Verhasselt P."/>
            <person name="Voet M."/>
            <person name="Volckaert G."/>
            <person name="Wambutt R."/>
            <person name="Watson M.D."/>
            <person name="Weber N."/>
            <person name="Wedler E."/>
            <person name="Wedler H."/>
            <person name="Wipfli P."/>
            <person name="Wolf K."/>
            <person name="Wright L.F."/>
            <person name="Zaccaria P."/>
            <person name="Zimmermann M."/>
            <person name="Zollner A."/>
            <person name="Kleine K."/>
        </authorList>
    </citation>
    <scope>NUCLEOTIDE SEQUENCE [LARGE SCALE GENOMIC DNA]</scope>
    <source>
        <strain>ATCC 204508 / S288c</strain>
    </source>
</reference>
<reference key="4">
    <citation type="journal article" date="2014" name="G3 (Bethesda)">
        <title>The reference genome sequence of Saccharomyces cerevisiae: Then and now.</title>
        <authorList>
            <person name="Engel S.R."/>
            <person name="Dietrich F.S."/>
            <person name="Fisk D.G."/>
            <person name="Binkley G."/>
            <person name="Balakrishnan R."/>
            <person name="Costanzo M.C."/>
            <person name="Dwight S.S."/>
            <person name="Hitz B.C."/>
            <person name="Karra K."/>
            <person name="Nash R.S."/>
            <person name="Weng S."/>
            <person name="Wong E.D."/>
            <person name="Lloyd P."/>
            <person name="Skrzypek M.S."/>
            <person name="Miyasato S.R."/>
            <person name="Simison M."/>
            <person name="Cherry J.M."/>
        </authorList>
    </citation>
    <scope>GENOME REANNOTATION</scope>
    <source>
        <strain>ATCC 204508 / S288c</strain>
    </source>
</reference>
<reference key="5">
    <citation type="journal article" date="1991" name="J. Biol. Chem.">
        <title>Rsr1 and Rap1 GTPases are activated by the same GTPase-activating protein and require threonine 65 for their activation.</title>
        <authorList>
            <person name="Holden J.L."/>
            <person name="Nur-E-Kamal M.S."/>
            <person name="Fabri L."/>
            <person name="Nice E."/>
            <person name="Hammacher A."/>
            <person name="Maruta H."/>
        </authorList>
    </citation>
    <scope>FUNCTION</scope>
    <scope>CATALYTIC ACTIVITY</scope>
    <scope>ACTIVITY REGULATION</scope>
    <scope>MUTAGENESIS OF GLY-12</scope>
</reference>
<reference key="6">
    <citation type="journal article" date="2018" name="J. Proteome Res.">
        <title>Enrichment-based proteogenomics identifies microproteins, missing proteins, and novel smORFs in Saccharomyces cerevisiae.</title>
        <authorList>
            <person name="He C."/>
            <person name="Jia C."/>
            <person name="Zhang Y."/>
            <person name="Xu P."/>
        </authorList>
    </citation>
    <scope>IDENTIFICATION BY MASS SPECTROMETRY</scope>
</reference>
<dbReference type="EC" id="3.6.5.2" evidence="4"/>
<dbReference type="EMBL" id="M26928">
    <property type="protein sequence ID" value="AAA35013.1"/>
    <property type="molecule type" value="Genomic_DNA"/>
</dbReference>
<dbReference type="EMBL" id="X85807">
    <property type="protein sequence ID" value="CAA59809.1"/>
    <property type="molecule type" value="Genomic_DNA"/>
</dbReference>
<dbReference type="EMBL" id="Z72936">
    <property type="protein sequence ID" value="CAA97166.1"/>
    <property type="molecule type" value="Genomic_DNA"/>
</dbReference>
<dbReference type="EMBL" id="BK006941">
    <property type="protein sequence ID" value="DAA08243.1"/>
    <property type="molecule type" value="Genomic_DNA"/>
</dbReference>
<dbReference type="PIR" id="A34511">
    <property type="entry name" value="A34511"/>
</dbReference>
<dbReference type="RefSeq" id="NP_011668.3">
    <property type="nucleotide sequence ID" value="NM_001181281.3"/>
</dbReference>
<dbReference type="SMR" id="P13856"/>
<dbReference type="BioGRID" id="33400">
    <property type="interactions" value="70"/>
</dbReference>
<dbReference type="DIP" id="DIP-2230N"/>
<dbReference type="FunCoup" id="P13856">
    <property type="interactions" value="339"/>
</dbReference>
<dbReference type="IntAct" id="P13856">
    <property type="interactions" value="26"/>
</dbReference>
<dbReference type="MINT" id="P13856"/>
<dbReference type="STRING" id="4932.YGR152C"/>
<dbReference type="iPTMnet" id="P13856"/>
<dbReference type="PaxDb" id="4932-YGR152C"/>
<dbReference type="PeptideAtlas" id="P13856"/>
<dbReference type="EnsemblFungi" id="YGR152C_mRNA">
    <property type="protein sequence ID" value="YGR152C"/>
    <property type="gene ID" value="YGR152C"/>
</dbReference>
<dbReference type="GeneID" id="853056"/>
<dbReference type="KEGG" id="sce:YGR152C"/>
<dbReference type="AGR" id="SGD:S000003384"/>
<dbReference type="SGD" id="S000003384">
    <property type="gene designation" value="RSR1"/>
</dbReference>
<dbReference type="VEuPathDB" id="FungiDB:YGR152C"/>
<dbReference type="eggNOG" id="KOG0395">
    <property type="taxonomic scope" value="Eukaryota"/>
</dbReference>
<dbReference type="GeneTree" id="ENSGT00940000173447"/>
<dbReference type="HOGENOM" id="CLU_041217_9_0_1"/>
<dbReference type="InParanoid" id="P13856"/>
<dbReference type="OMA" id="MPLREFK"/>
<dbReference type="OrthoDB" id="5976022at2759"/>
<dbReference type="BioCyc" id="YEAST:G3O-30854-MONOMER"/>
<dbReference type="Reactome" id="R-SCE-354192">
    <property type="pathway name" value="Integrin signaling"/>
</dbReference>
<dbReference type="Reactome" id="R-SCE-381676">
    <property type="pathway name" value="Glucagon-like Peptide-1 (GLP1) regulates insulin secretion"/>
</dbReference>
<dbReference type="Reactome" id="R-SCE-392517">
    <property type="pathway name" value="Rap1 signalling"/>
</dbReference>
<dbReference type="Reactome" id="R-SCE-6798695">
    <property type="pathway name" value="Neutrophil degranulation"/>
</dbReference>
<dbReference type="BioGRID-ORCS" id="853056">
    <property type="hits" value="0 hits in 10 CRISPR screens"/>
</dbReference>
<dbReference type="PRO" id="PR:P13856"/>
<dbReference type="Proteomes" id="UP000002311">
    <property type="component" value="Chromosome VII"/>
</dbReference>
<dbReference type="RNAct" id="P13856">
    <property type="molecule type" value="protein"/>
</dbReference>
<dbReference type="GO" id="GO:0032153">
    <property type="term" value="C:cell division site"/>
    <property type="evidence" value="ECO:0000314"/>
    <property type="project" value="SGD"/>
</dbReference>
<dbReference type="GO" id="GO:0071944">
    <property type="term" value="C:cell periphery"/>
    <property type="evidence" value="ECO:0007005"/>
    <property type="project" value="SGD"/>
</dbReference>
<dbReference type="GO" id="GO:0005935">
    <property type="term" value="C:cellular bud neck"/>
    <property type="evidence" value="ECO:0000314"/>
    <property type="project" value="SGD"/>
</dbReference>
<dbReference type="GO" id="GO:0005783">
    <property type="term" value="C:endoplasmic reticulum"/>
    <property type="evidence" value="ECO:0007005"/>
    <property type="project" value="SGD"/>
</dbReference>
<dbReference type="GO" id="GO:0000131">
    <property type="term" value="C:incipient cellular bud site"/>
    <property type="evidence" value="ECO:0000314"/>
    <property type="project" value="SGD"/>
</dbReference>
<dbReference type="GO" id="GO:0005886">
    <property type="term" value="C:plasma membrane"/>
    <property type="evidence" value="ECO:0000314"/>
    <property type="project" value="SGD"/>
</dbReference>
<dbReference type="GO" id="GO:0030427">
    <property type="term" value="C:site of polarized growth"/>
    <property type="evidence" value="ECO:0000314"/>
    <property type="project" value="SGD"/>
</dbReference>
<dbReference type="GO" id="GO:0005774">
    <property type="term" value="C:vacuolar membrane"/>
    <property type="evidence" value="ECO:0000314"/>
    <property type="project" value="SGD"/>
</dbReference>
<dbReference type="GO" id="GO:0003925">
    <property type="term" value="F:G protein activity"/>
    <property type="evidence" value="ECO:0007669"/>
    <property type="project" value="UniProtKB-EC"/>
</dbReference>
<dbReference type="GO" id="GO:0019003">
    <property type="term" value="F:GDP binding"/>
    <property type="evidence" value="ECO:0000318"/>
    <property type="project" value="GO_Central"/>
</dbReference>
<dbReference type="GO" id="GO:0005525">
    <property type="term" value="F:GTP binding"/>
    <property type="evidence" value="ECO:0000318"/>
    <property type="project" value="GO_Central"/>
</dbReference>
<dbReference type="GO" id="GO:0003924">
    <property type="term" value="F:GTPase activity"/>
    <property type="evidence" value="ECO:0000314"/>
    <property type="project" value="SGD"/>
</dbReference>
<dbReference type="GO" id="GO:0007120">
    <property type="term" value="P:axial cellular bud site selection"/>
    <property type="evidence" value="ECO:0000315"/>
    <property type="project" value="SGD"/>
</dbReference>
<dbReference type="GO" id="GO:0007121">
    <property type="term" value="P:bipolar cellular bud site selection"/>
    <property type="evidence" value="ECO:0000315"/>
    <property type="project" value="SGD"/>
</dbReference>
<dbReference type="GO" id="GO:0000755">
    <property type="term" value="P:cytogamy"/>
    <property type="evidence" value="ECO:0000315"/>
    <property type="project" value="SGD"/>
</dbReference>
<dbReference type="GO" id="GO:0045184">
    <property type="term" value="P:establishment of protein localization"/>
    <property type="evidence" value="ECO:0000315"/>
    <property type="project" value="SGD"/>
</dbReference>
<dbReference type="GO" id="GO:0032507">
    <property type="term" value="P:maintenance of protein location in cell"/>
    <property type="evidence" value="ECO:0000316"/>
    <property type="project" value="SGD"/>
</dbReference>
<dbReference type="GO" id="GO:0035025">
    <property type="term" value="P:positive regulation of Rho protein signal transduction"/>
    <property type="evidence" value="ECO:0000315"/>
    <property type="project" value="SGD"/>
</dbReference>
<dbReference type="GO" id="GO:2000114">
    <property type="term" value="P:regulation of establishment of cell polarity"/>
    <property type="evidence" value="ECO:0000315"/>
    <property type="project" value="SGD"/>
</dbReference>
<dbReference type="GO" id="GO:0007264">
    <property type="term" value="P:small GTPase-mediated signal transduction"/>
    <property type="evidence" value="ECO:0000315"/>
    <property type="project" value="SGD"/>
</dbReference>
<dbReference type="CDD" id="cd04177">
    <property type="entry name" value="RSR1"/>
    <property type="match status" value="1"/>
</dbReference>
<dbReference type="FunFam" id="3.40.50.300:FF:000631">
    <property type="entry name" value="Ras small monomeric GTPase"/>
    <property type="match status" value="1"/>
</dbReference>
<dbReference type="Gene3D" id="3.40.50.300">
    <property type="entry name" value="P-loop containing nucleotide triphosphate hydrolases"/>
    <property type="match status" value="1"/>
</dbReference>
<dbReference type="InterPro" id="IPR027417">
    <property type="entry name" value="P-loop_NTPase"/>
</dbReference>
<dbReference type="InterPro" id="IPR041841">
    <property type="entry name" value="Rsr1"/>
</dbReference>
<dbReference type="InterPro" id="IPR005225">
    <property type="entry name" value="Small_GTP-bd"/>
</dbReference>
<dbReference type="InterPro" id="IPR001806">
    <property type="entry name" value="Small_GTPase"/>
</dbReference>
<dbReference type="InterPro" id="IPR020849">
    <property type="entry name" value="Small_GTPase_Ras-type"/>
</dbReference>
<dbReference type="NCBIfam" id="TIGR00231">
    <property type="entry name" value="small_GTP"/>
    <property type="match status" value="1"/>
</dbReference>
<dbReference type="PANTHER" id="PTHR24070">
    <property type="entry name" value="RAS, DI-RAS, AND RHEB FAMILY MEMBERS OF SMALL GTPASE SUPERFAMILY"/>
    <property type="match status" value="1"/>
</dbReference>
<dbReference type="Pfam" id="PF00071">
    <property type="entry name" value="Ras"/>
    <property type="match status" value="1"/>
</dbReference>
<dbReference type="PRINTS" id="PR00449">
    <property type="entry name" value="RASTRNSFRMNG"/>
</dbReference>
<dbReference type="SMART" id="SM00175">
    <property type="entry name" value="RAB"/>
    <property type="match status" value="1"/>
</dbReference>
<dbReference type="SMART" id="SM00173">
    <property type="entry name" value="RAS"/>
    <property type="match status" value="1"/>
</dbReference>
<dbReference type="SMART" id="SM00174">
    <property type="entry name" value="RHO"/>
    <property type="match status" value="1"/>
</dbReference>
<dbReference type="SUPFAM" id="SSF52540">
    <property type="entry name" value="P-loop containing nucleoside triphosphate hydrolases"/>
    <property type="match status" value="1"/>
</dbReference>
<dbReference type="PROSITE" id="PS51421">
    <property type="entry name" value="RAS"/>
    <property type="match status" value="1"/>
</dbReference>
<evidence type="ECO:0000250" key="1"/>
<evidence type="ECO:0000255" key="2"/>
<evidence type="ECO:0000256" key="3">
    <source>
        <dbReference type="SAM" id="MobiDB-lite"/>
    </source>
</evidence>
<evidence type="ECO:0000269" key="4">
    <source>
    </source>
</evidence>
<evidence type="ECO:0000269" key="5">
    <source>
    </source>
</evidence>
<evidence type="ECO:0000303" key="6">
    <source>
    </source>
</evidence>
<evidence type="ECO:0000305" key="7"/>
<evidence type="ECO:0000312" key="8">
    <source>
        <dbReference type="SGD" id="S000003384"/>
    </source>
</evidence>
<sequence>MRDYKLVVLGAGGVGKSCLTVQFVQGVYLDTYDPTIEDSYRKTIEIDNKVFDLEILDTAGIAQFTAMRELYIKSGMGFLLVYSVTDRQSLEELMELREQVLRIKDSDRVPMVLIGNKADLINERVISVEEGIEVSSKWGRVPFYETSALLRSNVDEVFVDLVRQIIRNEMESVAVKDARNQSQQFSKIESPSTRLPSSAKQDTKQSNNKQSSKGLYNKSSQGQAKVKQSTPVNEKHKPSHAVPKSGSSNRTGISATSQQKKKKKNASTCTIL</sequence>
<accession>P13856</accession>
<accession>D6VUT2</accession>
<comment type="function">
    <text evidence="4 5">Ras-related protein which binds GDP/GTP and possesses intrinsic GTPase activity (PubMed:1910037). Involved in development of cell polarity during the cell division cycle, and essential for bud emergence (PubMed:2690082).</text>
</comment>
<comment type="catalytic activity">
    <reaction evidence="4">
        <text>GTP + H2O = GDP + phosphate + H(+)</text>
        <dbReference type="Rhea" id="RHEA:19669"/>
        <dbReference type="ChEBI" id="CHEBI:15377"/>
        <dbReference type="ChEBI" id="CHEBI:15378"/>
        <dbReference type="ChEBI" id="CHEBI:37565"/>
        <dbReference type="ChEBI" id="CHEBI:43474"/>
        <dbReference type="ChEBI" id="CHEBI:58189"/>
        <dbReference type="EC" id="3.6.5.2"/>
    </reaction>
</comment>
<comment type="activity regulation">
    <text evidence="4">Alternates between an inactive form bound to GDP and an active form bound to GTP (PubMed:1910037). Activated by a guanine nucleotide-exchange factor (GEF) and inactivated by a GTPase-activating protein (GAP) (PubMed:1910037).</text>
</comment>
<comment type="subcellular location">
    <subcellularLocation>
        <location evidence="7">Cell membrane</location>
        <topology evidence="7">Lipid-anchor</topology>
        <orientation evidence="7">Cytoplasmic side</orientation>
    </subcellularLocation>
</comment>
<comment type="similarity">
    <text evidence="7">Belongs to the small GTPase superfamily. Ras family.</text>
</comment>
<name>RSR1_YEAST</name>
<protein>
    <recommendedName>
        <fullName evidence="6">Ras-related protein RSR1</fullName>
        <ecNumber evidence="4">3.6.5.2</ecNumber>
    </recommendedName>
</protein>
<organism>
    <name type="scientific">Saccharomyces cerevisiae (strain ATCC 204508 / S288c)</name>
    <name type="common">Baker's yeast</name>
    <dbReference type="NCBI Taxonomy" id="559292"/>
    <lineage>
        <taxon>Eukaryota</taxon>
        <taxon>Fungi</taxon>
        <taxon>Dikarya</taxon>
        <taxon>Ascomycota</taxon>
        <taxon>Saccharomycotina</taxon>
        <taxon>Saccharomycetes</taxon>
        <taxon>Saccharomycetales</taxon>
        <taxon>Saccharomycetaceae</taxon>
        <taxon>Saccharomyces</taxon>
    </lineage>
</organism>
<keyword id="KW-0131">Cell cycle</keyword>
<keyword id="KW-0132">Cell division</keyword>
<keyword id="KW-1003">Cell membrane</keyword>
<keyword id="KW-0342">GTP-binding</keyword>
<keyword id="KW-0378">Hydrolase</keyword>
<keyword id="KW-0449">Lipoprotein</keyword>
<keyword id="KW-0472">Membrane</keyword>
<keyword id="KW-0488">Methylation</keyword>
<keyword id="KW-0547">Nucleotide-binding</keyword>
<keyword id="KW-0636">Prenylation</keyword>
<keyword id="KW-1185">Reference proteome</keyword>